<comment type="function">
    <text evidence="1">Catalyzes the 2-thiolation of uridine at the wobble position (U34) of tRNA, leading to the formation of s(2)U34.</text>
</comment>
<comment type="catalytic activity">
    <reaction evidence="1">
        <text>S-sulfanyl-L-cysteinyl-[protein] + uridine(34) in tRNA + AH2 + ATP = 2-thiouridine(34) in tRNA + L-cysteinyl-[protein] + A + AMP + diphosphate + H(+)</text>
        <dbReference type="Rhea" id="RHEA:47032"/>
        <dbReference type="Rhea" id="RHEA-COMP:10131"/>
        <dbReference type="Rhea" id="RHEA-COMP:11726"/>
        <dbReference type="Rhea" id="RHEA-COMP:11727"/>
        <dbReference type="Rhea" id="RHEA-COMP:11728"/>
        <dbReference type="ChEBI" id="CHEBI:13193"/>
        <dbReference type="ChEBI" id="CHEBI:15378"/>
        <dbReference type="ChEBI" id="CHEBI:17499"/>
        <dbReference type="ChEBI" id="CHEBI:29950"/>
        <dbReference type="ChEBI" id="CHEBI:30616"/>
        <dbReference type="ChEBI" id="CHEBI:33019"/>
        <dbReference type="ChEBI" id="CHEBI:61963"/>
        <dbReference type="ChEBI" id="CHEBI:65315"/>
        <dbReference type="ChEBI" id="CHEBI:87170"/>
        <dbReference type="ChEBI" id="CHEBI:456215"/>
        <dbReference type="EC" id="2.8.1.13"/>
    </reaction>
</comment>
<comment type="subcellular location">
    <subcellularLocation>
        <location evidence="1">Cytoplasm</location>
    </subcellularLocation>
</comment>
<comment type="similarity">
    <text evidence="1">Belongs to the MnmA/TRMU family.</text>
</comment>
<comment type="sequence caution" evidence="2">
    <conflict type="erroneous initiation">
        <sequence resource="EMBL-CDS" id="CAL09693"/>
    </conflict>
</comment>
<accession>Q14FW2</accession>
<name>MNMA_FRAT1</name>
<dbReference type="EC" id="2.8.1.13" evidence="1"/>
<dbReference type="EMBL" id="AM286280">
    <property type="protein sequence ID" value="CAL09693.1"/>
    <property type="status" value="ALT_INIT"/>
    <property type="molecule type" value="Genomic_DNA"/>
</dbReference>
<dbReference type="RefSeq" id="WP_003022640.1">
    <property type="nucleotide sequence ID" value="NC_008245.1"/>
</dbReference>
<dbReference type="SMR" id="Q14FW2"/>
<dbReference type="KEGG" id="ftf:FTF1677c"/>
<dbReference type="HOGENOM" id="CLU_035188_1_0_6"/>
<dbReference type="GO" id="GO:0005737">
    <property type="term" value="C:cytoplasm"/>
    <property type="evidence" value="ECO:0007669"/>
    <property type="project" value="UniProtKB-SubCell"/>
</dbReference>
<dbReference type="GO" id="GO:0005524">
    <property type="term" value="F:ATP binding"/>
    <property type="evidence" value="ECO:0007669"/>
    <property type="project" value="UniProtKB-KW"/>
</dbReference>
<dbReference type="GO" id="GO:0000049">
    <property type="term" value="F:tRNA binding"/>
    <property type="evidence" value="ECO:0007669"/>
    <property type="project" value="UniProtKB-KW"/>
</dbReference>
<dbReference type="GO" id="GO:0103016">
    <property type="term" value="F:tRNA-uridine 2-sulfurtransferase activity"/>
    <property type="evidence" value="ECO:0007669"/>
    <property type="project" value="UniProtKB-EC"/>
</dbReference>
<dbReference type="GO" id="GO:0002143">
    <property type="term" value="P:tRNA wobble position uridine thiolation"/>
    <property type="evidence" value="ECO:0007669"/>
    <property type="project" value="TreeGrafter"/>
</dbReference>
<dbReference type="CDD" id="cd01998">
    <property type="entry name" value="MnmA_TRMU-like"/>
    <property type="match status" value="1"/>
</dbReference>
<dbReference type="FunFam" id="2.30.30.280:FF:000001">
    <property type="entry name" value="tRNA-specific 2-thiouridylase MnmA"/>
    <property type="match status" value="1"/>
</dbReference>
<dbReference type="FunFam" id="2.40.30.10:FF:000023">
    <property type="entry name" value="tRNA-specific 2-thiouridylase MnmA"/>
    <property type="match status" value="1"/>
</dbReference>
<dbReference type="FunFam" id="3.40.50.620:FF:000004">
    <property type="entry name" value="tRNA-specific 2-thiouridylase MnmA"/>
    <property type="match status" value="1"/>
</dbReference>
<dbReference type="Gene3D" id="2.30.30.280">
    <property type="entry name" value="Adenine nucleotide alpha hydrolases-like domains"/>
    <property type="match status" value="1"/>
</dbReference>
<dbReference type="Gene3D" id="3.40.50.620">
    <property type="entry name" value="HUPs"/>
    <property type="match status" value="1"/>
</dbReference>
<dbReference type="Gene3D" id="2.40.30.10">
    <property type="entry name" value="Translation factors"/>
    <property type="match status" value="1"/>
</dbReference>
<dbReference type="HAMAP" id="MF_00144">
    <property type="entry name" value="tRNA_thiouridyl_MnmA"/>
    <property type="match status" value="1"/>
</dbReference>
<dbReference type="InterPro" id="IPR004506">
    <property type="entry name" value="MnmA-like"/>
</dbReference>
<dbReference type="InterPro" id="IPR046885">
    <property type="entry name" value="MnmA-like_C"/>
</dbReference>
<dbReference type="InterPro" id="IPR046884">
    <property type="entry name" value="MnmA-like_central"/>
</dbReference>
<dbReference type="InterPro" id="IPR023382">
    <property type="entry name" value="MnmA-like_central_sf"/>
</dbReference>
<dbReference type="InterPro" id="IPR014729">
    <property type="entry name" value="Rossmann-like_a/b/a_fold"/>
</dbReference>
<dbReference type="NCBIfam" id="NF001138">
    <property type="entry name" value="PRK00143.1"/>
    <property type="match status" value="1"/>
</dbReference>
<dbReference type="NCBIfam" id="TIGR00420">
    <property type="entry name" value="trmU"/>
    <property type="match status" value="1"/>
</dbReference>
<dbReference type="PANTHER" id="PTHR11933:SF5">
    <property type="entry name" value="MITOCHONDRIAL TRNA-SPECIFIC 2-THIOURIDYLASE 1"/>
    <property type="match status" value="1"/>
</dbReference>
<dbReference type="PANTHER" id="PTHR11933">
    <property type="entry name" value="TRNA 5-METHYLAMINOMETHYL-2-THIOURIDYLATE -METHYLTRANSFERASE"/>
    <property type="match status" value="1"/>
</dbReference>
<dbReference type="Pfam" id="PF03054">
    <property type="entry name" value="tRNA_Me_trans"/>
    <property type="match status" value="1"/>
</dbReference>
<dbReference type="Pfam" id="PF20258">
    <property type="entry name" value="tRNA_Me_trans_C"/>
    <property type="match status" value="1"/>
</dbReference>
<dbReference type="Pfam" id="PF20259">
    <property type="entry name" value="tRNA_Me_trans_M"/>
    <property type="match status" value="1"/>
</dbReference>
<dbReference type="SUPFAM" id="SSF52402">
    <property type="entry name" value="Adenine nucleotide alpha hydrolases-like"/>
    <property type="match status" value="1"/>
</dbReference>
<feature type="chain" id="PRO_0000349641" description="tRNA-specific 2-thiouridylase MnmA">
    <location>
        <begin position="1"/>
        <end position="359"/>
    </location>
</feature>
<feature type="region of interest" description="Interaction with target base in tRNA" evidence="1">
    <location>
        <begin position="95"/>
        <end position="97"/>
    </location>
</feature>
<feature type="region of interest" description="Interaction with tRNA" evidence="1">
    <location>
        <begin position="147"/>
        <end position="149"/>
    </location>
</feature>
<feature type="region of interest" description="Interaction with tRNA" evidence="1">
    <location>
        <begin position="309"/>
        <end position="310"/>
    </location>
</feature>
<feature type="active site" description="Nucleophile" evidence="1">
    <location>
        <position position="100"/>
    </location>
</feature>
<feature type="active site" description="Cysteine persulfide intermediate" evidence="1">
    <location>
        <position position="197"/>
    </location>
</feature>
<feature type="binding site" evidence="1">
    <location>
        <begin position="9"/>
        <end position="16"/>
    </location>
    <ligand>
        <name>ATP</name>
        <dbReference type="ChEBI" id="CHEBI:30616"/>
    </ligand>
</feature>
<feature type="binding site" evidence="1">
    <location>
        <position position="35"/>
    </location>
    <ligand>
        <name>ATP</name>
        <dbReference type="ChEBI" id="CHEBI:30616"/>
    </ligand>
</feature>
<feature type="binding site" evidence="1">
    <location>
        <position position="124"/>
    </location>
    <ligand>
        <name>ATP</name>
        <dbReference type="ChEBI" id="CHEBI:30616"/>
    </ligand>
</feature>
<feature type="site" description="Interaction with tRNA" evidence="1">
    <location>
        <position position="125"/>
    </location>
</feature>
<feature type="site" description="Interaction with tRNA" evidence="1">
    <location>
        <position position="342"/>
    </location>
</feature>
<feature type="disulfide bond" description="Alternate" evidence="1">
    <location>
        <begin position="100"/>
        <end position="197"/>
    </location>
</feature>
<protein>
    <recommendedName>
        <fullName evidence="1">tRNA-specific 2-thiouridylase MnmA</fullName>
        <ecNumber evidence="1">2.8.1.13</ecNumber>
    </recommendedName>
</protein>
<keyword id="KW-0067">ATP-binding</keyword>
<keyword id="KW-0963">Cytoplasm</keyword>
<keyword id="KW-1015">Disulfide bond</keyword>
<keyword id="KW-0547">Nucleotide-binding</keyword>
<keyword id="KW-0694">RNA-binding</keyword>
<keyword id="KW-0808">Transferase</keyword>
<keyword id="KW-0819">tRNA processing</keyword>
<keyword id="KW-0820">tRNA-binding</keyword>
<proteinExistence type="inferred from homology"/>
<gene>
    <name evidence="1" type="primary">mnmA</name>
    <name type="ordered locus">FTF1677c</name>
</gene>
<reference key="1">
    <citation type="journal article" date="2007" name="PLoS ONE">
        <title>Genome sequencing shows that European isolates of Francisella tularensis subspecies tularensis are almost identical to US laboratory strain Schu S4.</title>
        <authorList>
            <person name="Chaudhuri R.R."/>
            <person name="Ren C.-P."/>
            <person name="Desmond L."/>
            <person name="Vincent G.A."/>
            <person name="Silman N.J."/>
            <person name="Brehm J.K."/>
            <person name="Elmore M.J."/>
            <person name="Hudson M.J."/>
            <person name="Forsman M."/>
            <person name="Isherwood K.E."/>
            <person name="Gurycova D."/>
            <person name="Minton N.P."/>
            <person name="Titball R.W."/>
            <person name="Pallen M.J."/>
            <person name="Vipond R."/>
        </authorList>
    </citation>
    <scope>NUCLEOTIDE SEQUENCE [LARGE SCALE GENOMIC DNA]</scope>
    <source>
        <strain>FSC 198</strain>
    </source>
</reference>
<organism>
    <name type="scientific">Francisella tularensis subsp. tularensis (strain FSC 198)</name>
    <dbReference type="NCBI Taxonomy" id="393115"/>
    <lineage>
        <taxon>Bacteria</taxon>
        <taxon>Pseudomonadati</taxon>
        <taxon>Pseudomonadota</taxon>
        <taxon>Gammaproteobacteria</taxon>
        <taxon>Thiotrichales</taxon>
        <taxon>Francisellaceae</taxon>
        <taxon>Francisella</taxon>
    </lineage>
</organism>
<sequence>MENKKVIVGISGGVDSSVSALLLKQQGYDVTGVFMKNWEEDDTDEFCSAEQDIADAQAVCDSIGIPFKKINFAAEYWDNVFEHFLIEYKAGRTPNPDILCNKEIKFKAFLSYVHLLGGDYIATGHYAQTRLAADGSVQLVKGLDDNKDQTYFLYTLGQEQLRQTIFPIGNIEKSKVREIAKENNLVTFDKKDSTGICFIGERKFKEFLSKYLPAQKGEIHDENGIKIGMHDGLMYYTIGQRQGLGIGGVKDRPEVPWFAAKKDLENNVLIAVQGHDHPLLFKQSLQAIELSWVAGMAPADKFRCAAKVRYRQKDQSCEVEVNQDGSVNVTFDQPQRAITPGQSVVFYIDDVCLGGGVII</sequence>
<evidence type="ECO:0000255" key="1">
    <source>
        <dbReference type="HAMAP-Rule" id="MF_00144"/>
    </source>
</evidence>
<evidence type="ECO:0000305" key="2"/>